<evidence type="ECO:0000250" key="1"/>
<evidence type="ECO:0000250" key="2">
    <source>
        <dbReference type="UniProtKB" id="Q6S5L8"/>
    </source>
</evidence>
<evidence type="ECO:0000255" key="3">
    <source>
        <dbReference type="PROSITE-ProRule" id="PRU00148"/>
    </source>
</evidence>
<evidence type="ECO:0000255" key="4">
    <source>
        <dbReference type="PROSITE-ProRule" id="PRU00191"/>
    </source>
</evidence>
<evidence type="ECO:0000256" key="5">
    <source>
        <dbReference type="SAM" id="MobiDB-lite"/>
    </source>
</evidence>
<evidence type="ECO:0000269" key="6">
    <source>
    </source>
</evidence>
<gene>
    <name type="primary">Shc4</name>
    <name type="synonym">Shcd</name>
</gene>
<accession>Q6S5L9</accession>
<comment type="function">
    <text evidence="6">Activates both Ras-dependent and Ras-independent migratory pathways in melanomas. Contributes to the early phases of agrin-induced tyrosine phosphorylation of CHRNB1.</text>
</comment>
<comment type="subunit">
    <text evidence="1">Interacts (via PID domain) with phosphorylated MUSK (via NPXY motif); undergoes tyrosine phosphorylation downstream of activated MUSK. Interacts with GRB2; the interaction is dependent of Tyr-422 phosphorylation and increased by EGF (By similarity).</text>
</comment>
<comment type="subcellular location">
    <subcellularLocation>
        <location evidence="6">Postsynaptic cell membrane</location>
    </subcellularLocation>
    <text>Colocalized with MUSK at the neuromuscular junction.</text>
</comment>
<comment type="tissue specificity">
    <text evidence="6">Expressed in both brain and skeletal muscle; widely expressed in brain namely olfactory bulb, cortex, hippocampus, striatum, thalamus, and brain stem (at protein level). Only expressed in melanomas. Weakly expressed in normal melanocytes and benign nevi. Highly expressed at the transition from radial growth phase to vertical growth phase and metastatic melanomas, when tumor cells acquire migratory competence and invasive potential.</text>
</comment>
<comment type="PTM">
    <text evidence="1">Phosphorylated; the phosphorylation is enhanced by EGF. Phosphorylation at Tyr-422 is required for the interaction with GRB2 (By similarity).</text>
</comment>
<reference key="1">
    <citation type="journal article" date="2007" name="Cancer Res.">
        <title>RaLP, a new member of the Src homology and collagen family, regulates cell migration and tumor growth of metastatic melanomas.</title>
        <authorList>
            <person name="Fagiani E."/>
            <person name="Giardina G."/>
            <person name="Luzi L."/>
            <person name="Cesaroni M."/>
            <person name="Quarto M."/>
            <person name="Capra M."/>
            <person name="Germano G."/>
            <person name="Bono M."/>
            <person name="Capillo M."/>
            <person name="Pelicci P."/>
            <person name="Lanfrancone L."/>
        </authorList>
    </citation>
    <scope>NUCLEOTIDE SEQUENCE [MRNA]</scope>
    <source>
        <strain>C57BL/6J</strain>
    </source>
</reference>
<reference key="2">
    <citation type="journal article" date="2009" name="PLoS Biol.">
        <title>Lineage-specific biology revealed by a finished genome assembly of the mouse.</title>
        <authorList>
            <person name="Church D.M."/>
            <person name="Goodstadt L."/>
            <person name="Hillier L.W."/>
            <person name="Zody M.C."/>
            <person name="Goldstein S."/>
            <person name="She X."/>
            <person name="Bult C.J."/>
            <person name="Agarwala R."/>
            <person name="Cherry J.L."/>
            <person name="DiCuccio M."/>
            <person name="Hlavina W."/>
            <person name="Kapustin Y."/>
            <person name="Meric P."/>
            <person name="Maglott D."/>
            <person name="Birtle Z."/>
            <person name="Marques A.C."/>
            <person name="Graves T."/>
            <person name="Zhou S."/>
            <person name="Teague B."/>
            <person name="Potamousis K."/>
            <person name="Churas C."/>
            <person name="Place M."/>
            <person name="Herschleb J."/>
            <person name="Runnheim R."/>
            <person name="Forrest D."/>
            <person name="Amos-Landgraf J."/>
            <person name="Schwartz D.C."/>
            <person name="Cheng Z."/>
            <person name="Lindblad-Toh K."/>
            <person name="Eichler E.E."/>
            <person name="Ponting C.P."/>
        </authorList>
    </citation>
    <scope>NUCLEOTIDE SEQUENCE [LARGE SCALE GENOMIC DNA]</scope>
    <source>
        <strain>C57BL/6J</strain>
    </source>
</reference>
<reference key="3">
    <citation type="journal article" date="2007" name="Mol. Cell. Biol.">
        <title>Analysis of a Shc family adaptor protein, ShcD/Shc4, that associates with muscle-specific kinase.</title>
        <authorList>
            <person name="Jones N."/>
            <person name="Hardy W.R."/>
            <person name="Friese M.B."/>
            <person name="Jorgensen C."/>
            <person name="Smith M.J."/>
            <person name="Woody N.M."/>
            <person name="Burden S.J."/>
            <person name="Pawson T."/>
        </authorList>
    </citation>
    <scope>TISSUE SPECIFICITY</scope>
    <scope>FUNCTION</scope>
    <scope>SUBCELLULAR LOCATION</scope>
</reference>
<keyword id="KW-1003">Cell membrane</keyword>
<keyword id="KW-0472">Membrane</keyword>
<keyword id="KW-0597">Phosphoprotein</keyword>
<keyword id="KW-0628">Postsynaptic cell membrane</keyword>
<keyword id="KW-1185">Reference proteome</keyword>
<keyword id="KW-0727">SH2 domain</keyword>
<keyword id="KW-0770">Synapse</keyword>
<proteinExistence type="evidence at protein level"/>
<organism>
    <name type="scientific">Mus musculus</name>
    <name type="common">Mouse</name>
    <dbReference type="NCBI Taxonomy" id="10090"/>
    <lineage>
        <taxon>Eukaryota</taxon>
        <taxon>Metazoa</taxon>
        <taxon>Chordata</taxon>
        <taxon>Craniata</taxon>
        <taxon>Vertebrata</taxon>
        <taxon>Euteleostomi</taxon>
        <taxon>Mammalia</taxon>
        <taxon>Eutheria</taxon>
        <taxon>Euarchontoglires</taxon>
        <taxon>Glires</taxon>
        <taxon>Rodentia</taxon>
        <taxon>Myomorpha</taxon>
        <taxon>Muroidea</taxon>
        <taxon>Muridae</taxon>
        <taxon>Murinae</taxon>
        <taxon>Mus</taxon>
        <taxon>Mus</taxon>
    </lineage>
</organism>
<feature type="chain" id="PRO_0000337201" description="SHC-transforming protein 4">
    <location>
        <begin position="1"/>
        <end position="626"/>
    </location>
</feature>
<feature type="domain" description="PID" evidence="3">
    <location>
        <begin position="186"/>
        <end position="369"/>
    </location>
</feature>
<feature type="domain" description="SH2" evidence="4">
    <location>
        <begin position="522"/>
        <end position="613"/>
    </location>
</feature>
<feature type="region of interest" description="CH2">
    <location>
        <begin position="1"/>
        <end position="185"/>
    </location>
</feature>
<feature type="region of interest" description="Disordered" evidence="5">
    <location>
        <begin position="38"/>
        <end position="76"/>
    </location>
</feature>
<feature type="region of interest" description="Disordered" evidence="5">
    <location>
        <begin position="119"/>
        <end position="182"/>
    </location>
</feature>
<feature type="region of interest" description="CH1">
    <location>
        <begin position="370"/>
        <end position="521"/>
    </location>
</feature>
<feature type="compositionally biased region" description="Polar residues" evidence="5">
    <location>
        <begin position="120"/>
        <end position="139"/>
    </location>
</feature>
<feature type="modified residue" description="Phosphotyrosine" evidence="2">
    <location>
        <position position="422"/>
    </location>
</feature>
<name>SHC4_MOUSE</name>
<protein>
    <recommendedName>
        <fullName>SHC-transforming protein 4</fullName>
    </recommendedName>
    <alternativeName>
        <fullName>Rai-like protein</fullName>
        <shortName>RaLP</shortName>
    </alternativeName>
    <alternativeName>
        <fullName>SHC-transforming protein D</fullName>
        <shortName>mShcD</shortName>
    </alternativeName>
    <alternativeName>
        <fullName>Src homology 2 domain-containing-transforming protein C4</fullName>
        <shortName>SH2 domain protein C4</shortName>
    </alternativeName>
</protein>
<sequence>MRERSQDSQAGLTLYVGLFGHLGMLHRTKYSRFRNESITSLDEGSPGGSVGNKGSSPPPYPALAPHLPTEDATVSSQESPTALCTLIPRMASMKLANPITFLGLKTFCLGTKQVSRLKLQENQDQTPSRPASPESNLNRTGPAPAPDPDQVGRRPTSLRPDTCPLPGPGEPSPRSKQDGPPLQHLLGNGLNYCVRYMGCIEVLQSMRSLDFGMRTQVTREAISRLCEAVPGAHGAIKKRKAPVKFLTTVLGKSNLQFSGMNIKLTVSTSSLTLMNLDNQQIIANHQMQSISFASGGDPDTTDYVAYVAKDPVNQRACHILECRSGMAQDVISTIGQAFELRFKQYLKNPSLNTWEREEVLVDGAPEDRDHDYYNSIPGKQPPEGGISDVRIQAQATDQMAYCPIRCEKLCYLPGNSTCSGVYKNCMGRSRPIGIPHERAGQGDTPSLRHFWRVDLFDDPCYVNTQALQSMHSYAGNQSSALPQGSPWHLGKAPETVQPGATAKPGSALALPHIRQQLWDEECFHGKLSRGAAEKLLVKDGDFLVRESVTSPGQFVLSGLQGGQAKHLLLVDPEGKVRTKDHVFDNVGHLIKYHMDNNLPIISSGSEVRLKQPIRKYDNTGLLPPKK</sequence>
<dbReference type="EMBL" id="AY464564">
    <property type="protein sequence ID" value="AAR19362.1"/>
    <property type="molecule type" value="mRNA"/>
</dbReference>
<dbReference type="EMBL" id="AL844580">
    <property type="status" value="NOT_ANNOTATED_CDS"/>
    <property type="molecule type" value="Genomic_DNA"/>
</dbReference>
<dbReference type="EMBL" id="AL929166">
    <property type="status" value="NOT_ANNOTATED_CDS"/>
    <property type="molecule type" value="Genomic_DNA"/>
</dbReference>
<dbReference type="CCDS" id="CCDS16678.1"/>
<dbReference type="RefSeq" id="NP_950187.1">
    <property type="nucleotide sequence ID" value="NM_199022.3"/>
</dbReference>
<dbReference type="SMR" id="Q6S5L9"/>
<dbReference type="BioGRID" id="234854">
    <property type="interactions" value="1"/>
</dbReference>
<dbReference type="FunCoup" id="Q6S5L9">
    <property type="interactions" value="1425"/>
</dbReference>
<dbReference type="STRING" id="10090.ENSMUSP00000043146"/>
<dbReference type="iPTMnet" id="Q6S5L9"/>
<dbReference type="PhosphoSitePlus" id="Q6S5L9"/>
<dbReference type="jPOST" id="Q6S5L9"/>
<dbReference type="PaxDb" id="10090-ENSMUSP00000043146"/>
<dbReference type="ProteomicsDB" id="257223"/>
<dbReference type="Antibodypedia" id="24605">
    <property type="antibodies" value="169 antibodies from 31 providers"/>
</dbReference>
<dbReference type="DNASU" id="271849"/>
<dbReference type="Ensembl" id="ENSMUST00000042246.14">
    <property type="protein sequence ID" value="ENSMUSP00000043146.8"/>
    <property type="gene ID" value="ENSMUSG00000035109.15"/>
</dbReference>
<dbReference type="GeneID" id="271849"/>
<dbReference type="KEGG" id="mmu:271849"/>
<dbReference type="UCSC" id="uc008mcv.1">
    <property type="organism name" value="mouse"/>
</dbReference>
<dbReference type="AGR" id="MGI:2655364"/>
<dbReference type="CTD" id="399694"/>
<dbReference type="MGI" id="MGI:2655364">
    <property type="gene designation" value="Shc4"/>
</dbReference>
<dbReference type="VEuPathDB" id="HostDB:ENSMUSG00000035109"/>
<dbReference type="eggNOG" id="KOG3697">
    <property type="taxonomic scope" value="Eukaryota"/>
</dbReference>
<dbReference type="GeneTree" id="ENSGT00950000182870"/>
<dbReference type="HOGENOM" id="CLU_029532_2_0_1"/>
<dbReference type="InParanoid" id="Q6S5L9"/>
<dbReference type="OMA" id="MNIDNQQ"/>
<dbReference type="OrthoDB" id="9938362at2759"/>
<dbReference type="PhylomeDB" id="Q6S5L9"/>
<dbReference type="TreeFam" id="TF315807"/>
<dbReference type="BioGRID-ORCS" id="271849">
    <property type="hits" value="0 hits in 77 CRISPR screens"/>
</dbReference>
<dbReference type="ChiTaRS" id="Shc4">
    <property type="organism name" value="mouse"/>
</dbReference>
<dbReference type="PRO" id="PR:Q6S5L9"/>
<dbReference type="Proteomes" id="UP000000589">
    <property type="component" value="Chromosome 2"/>
</dbReference>
<dbReference type="RNAct" id="Q6S5L9">
    <property type="molecule type" value="protein"/>
</dbReference>
<dbReference type="Bgee" id="ENSMUSG00000035109">
    <property type="expression patterns" value="Expressed in sciatic nerve and 127 other cell types or tissues"/>
</dbReference>
<dbReference type="ExpressionAtlas" id="Q6S5L9">
    <property type="expression patterns" value="baseline and differential"/>
</dbReference>
<dbReference type="GO" id="GO:0045211">
    <property type="term" value="C:postsynaptic membrane"/>
    <property type="evidence" value="ECO:0007669"/>
    <property type="project" value="UniProtKB-SubCell"/>
</dbReference>
<dbReference type="GO" id="GO:0019904">
    <property type="term" value="F:protein domain specific binding"/>
    <property type="evidence" value="ECO:0000353"/>
    <property type="project" value="MGI"/>
</dbReference>
<dbReference type="GO" id="GO:0030971">
    <property type="term" value="F:receptor tyrosine kinase binding"/>
    <property type="evidence" value="ECO:0000353"/>
    <property type="project" value="MGI"/>
</dbReference>
<dbReference type="GO" id="GO:0006915">
    <property type="term" value="P:apoptotic process"/>
    <property type="evidence" value="ECO:0000315"/>
    <property type="project" value="MGI"/>
</dbReference>
<dbReference type="GO" id="GO:0035556">
    <property type="term" value="P:intracellular signal transduction"/>
    <property type="evidence" value="ECO:0007669"/>
    <property type="project" value="InterPro"/>
</dbReference>
<dbReference type="GO" id="GO:0008284">
    <property type="term" value="P:positive regulation of cell population proliferation"/>
    <property type="evidence" value="ECO:0000315"/>
    <property type="project" value="MGI"/>
</dbReference>
<dbReference type="GO" id="GO:0010468">
    <property type="term" value="P:regulation of gene expression"/>
    <property type="evidence" value="ECO:0000315"/>
    <property type="project" value="MGI"/>
</dbReference>
<dbReference type="GO" id="GO:0048863">
    <property type="term" value="P:stem cell differentiation"/>
    <property type="evidence" value="ECO:0000315"/>
    <property type="project" value="MGI"/>
</dbReference>
<dbReference type="CDD" id="cd01209">
    <property type="entry name" value="PTB_Shc"/>
    <property type="match status" value="1"/>
</dbReference>
<dbReference type="CDD" id="cd09925">
    <property type="entry name" value="SH2_SHC"/>
    <property type="match status" value="1"/>
</dbReference>
<dbReference type="FunFam" id="2.30.29.30:FF:000036">
    <property type="entry name" value="SHC-transforming protein 1 isoform 3"/>
    <property type="match status" value="1"/>
</dbReference>
<dbReference type="FunFam" id="3.30.505.10:FF:000005">
    <property type="entry name" value="SHC-transforming protein 1 isoform 3"/>
    <property type="match status" value="1"/>
</dbReference>
<dbReference type="Gene3D" id="2.30.29.30">
    <property type="entry name" value="Pleckstrin-homology domain (PH domain)/Phosphotyrosine-binding domain (PTB)"/>
    <property type="match status" value="1"/>
</dbReference>
<dbReference type="Gene3D" id="3.30.505.10">
    <property type="entry name" value="SH2 domain"/>
    <property type="match status" value="1"/>
</dbReference>
<dbReference type="InterPro" id="IPR051235">
    <property type="entry name" value="CEP152/SHC-Transforming"/>
</dbReference>
<dbReference type="InterPro" id="IPR011993">
    <property type="entry name" value="PH-like_dom_sf"/>
</dbReference>
<dbReference type="InterPro" id="IPR006019">
    <property type="entry name" value="PID_Shc-like"/>
</dbReference>
<dbReference type="InterPro" id="IPR006020">
    <property type="entry name" value="PTB/PI_dom"/>
</dbReference>
<dbReference type="InterPro" id="IPR000980">
    <property type="entry name" value="SH2"/>
</dbReference>
<dbReference type="InterPro" id="IPR036860">
    <property type="entry name" value="SH2_dom_sf"/>
</dbReference>
<dbReference type="InterPro" id="IPR035676">
    <property type="entry name" value="SHC_SH2"/>
</dbReference>
<dbReference type="PANTHER" id="PTHR10337">
    <property type="entry name" value="SHC TRANSFORMING PROTEIN"/>
    <property type="match status" value="1"/>
</dbReference>
<dbReference type="PANTHER" id="PTHR10337:SF12">
    <property type="entry name" value="SHC-TRANSFORMING PROTEIN 4"/>
    <property type="match status" value="1"/>
</dbReference>
<dbReference type="Pfam" id="PF00640">
    <property type="entry name" value="PID"/>
    <property type="match status" value="1"/>
</dbReference>
<dbReference type="Pfam" id="PF00017">
    <property type="entry name" value="SH2"/>
    <property type="match status" value="1"/>
</dbReference>
<dbReference type="PRINTS" id="PR00401">
    <property type="entry name" value="SH2DOMAIN"/>
</dbReference>
<dbReference type="PRINTS" id="PR00629">
    <property type="entry name" value="SHCPIDOMAIN"/>
</dbReference>
<dbReference type="SMART" id="SM00462">
    <property type="entry name" value="PTB"/>
    <property type="match status" value="1"/>
</dbReference>
<dbReference type="SMART" id="SM00252">
    <property type="entry name" value="SH2"/>
    <property type="match status" value="1"/>
</dbReference>
<dbReference type="SUPFAM" id="SSF50729">
    <property type="entry name" value="PH domain-like"/>
    <property type="match status" value="1"/>
</dbReference>
<dbReference type="SUPFAM" id="SSF55550">
    <property type="entry name" value="SH2 domain"/>
    <property type="match status" value="1"/>
</dbReference>
<dbReference type="PROSITE" id="PS01179">
    <property type="entry name" value="PID"/>
    <property type="match status" value="1"/>
</dbReference>
<dbReference type="PROSITE" id="PS50001">
    <property type="entry name" value="SH2"/>
    <property type="match status" value="1"/>
</dbReference>